<protein>
    <recommendedName>
        <fullName evidence="1">DNA ligase B</fullName>
        <ecNumber evidence="1">6.5.1.2</ecNumber>
    </recommendedName>
    <alternativeName>
        <fullName evidence="1">Polydeoxyribonucleotide synthase [NAD(+)] B</fullName>
    </alternativeName>
</protein>
<reference key="1">
    <citation type="journal article" date="2009" name="PLoS Genet.">
        <title>Organised genome dynamics in the Escherichia coli species results in highly diverse adaptive paths.</title>
        <authorList>
            <person name="Touchon M."/>
            <person name="Hoede C."/>
            <person name="Tenaillon O."/>
            <person name="Barbe V."/>
            <person name="Baeriswyl S."/>
            <person name="Bidet P."/>
            <person name="Bingen E."/>
            <person name="Bonacorsi S."/>
            <person name="Bouchier C."/>
            <person name="Bouvet O."/>
            <person name="Calteau A."/>
            <person name="Chiapello H."/>
            <person name="Clermont O."/>
            <person name="Cruveiller S."/>
            <person name="Danchin A."/>
            <person name="Diard M."/>
            <person name="Dossat C."/>
            <person name="Karoui M.E."/>
            <person name="Frapy E."/>
            <person name="Garry L."/>
            <person name="Ghigo J.M."/>
            <person name="Gilles A.M."/>
            <person name="Johnson J."/>
            <person name="Le Bouguenec C."/>
            <person name="Lescat M."/>
            <person name="Mangenot S."/>
            <person name="Martinez-Jehanne V."/>
            <person name="Matic I."/>
            <person name="Nassif X."/>
            <person name="Oztas S."/>
            <person name="Petit M.A."/>
            <person name="Pichon C."/>
            <person name="Rouy Z."/>
            <person name="Ruf C.S."/>
            <person name="Schneider D."/>
            <person name="Tourret J."/>
            <person name="Vacherie B."/>
            <person name="Vallenet D."/>
            <person name="Medigue C."/>
            <person name="Rocha E.P.C."/>
            <person name="Denamur E."/>
        </authorList>
    </citation>
    <scope>NUCLEOTIDE SEQUENCE [LARGE SCALE GENOMIC DNA]</scope>
    <source>
        <strain>ED1a</strain>
    </source>
</reference>
<organism>
    <name type="scientific">Escherichia coli O81 (strain ED1a)</name>
    <dbReference type="NCBI Taxonomy" id="585397"/>
    <lineage>
        <taxon>Bacteria</taxon>
        <taxon>Pseudomonadati</taxon>
        <taxon>Pseudomonadota</taxon>
        <taxon>Gammaproteobacteria</taxon>
        <taxon>Enterobacterales</taxon>
        <taxon>Enterobacteriaceae</taxon>
        <taxon>Escherichia</taxon>
    </lineage>
</organism>
<dbReference type="EC" id="6.5.1.2" evidence="1"/>
<dbReference type="EMBL" id="CU928162">
    <property type="protein sequence ID" value="CAR10458.2"/>
    <property type="molecule type" value="Genomic_DNA"/>
</dbReference>
<dbReference type="RefSeq" id="WP_012601795.1">
    <property type="nucleotide sequence ID" value="NC_011745.1"/>
</dbReference>
<dbReference type="SMR" id="B7N287"/>
<dbReference type="KEGG" id="ecq:ECED1_4330"/>
<dbReference type="HOGENOM" id="CLU_489786_0_0_6"/>
<dbReference type="Proteomes" id="UP000000748">
    <property type="component" value="Chromosome"/>
</dbReference>
<dbReference type="GO" id="GO:0003911">
    <property type="term" value="F:DNA ligase (NAD+) activity"/>
    <property type="evidence" value="ECO:0007669"/>
    <property type="project" value="UniProtKB-UniRule"/>
</dbReference>
<dbReference type="GO" id="GO:0006281">
    <property type="term" value="P:DNA repair"/>
    <property type="evidence" value="ECO:0007669"/>
    <property type="project" value="UniProtKB-KW"/>
</dbReference>
<dbReference type="GO" id="GO:0006260">
    <property type="term" value="P:DNA replication"/>
    <property type="evidence" value="ECO:0007669"/>
    <property type="project" value="UniProtKB-KW"/>
</dbReference>
<dbReference type="FunFam" id="1.10.287.610:FF:000003">
    <property type="entry name" value="DNA ligase B"/>
    <property type="match status" value="1"/>
</dbReference>
<dbReference type="FunFam" id="2.40.50.140:FF:000139">
    <property type="entry name" value="DNA ligase B"/>
    <property type="match status" value="1"/>
</dbReference>
<dbReference type="FunFam" id="3.30.470.30:FF:000007">
    <property type="entry name" value="DNA ligase B"/>
    <property type="match status" value="1"/>
</dbReference>
<dbReference type="Gene3D" id="3.30.470.30">
    <property type="entry name" value="DNA ligase/mRNA capping enzyme"/>
    <property type="match status" value="1"/>
</dbReference>
<dbReference type="Gene3D" id="1.10.287.610">
    <property type="entry name" value="Helix hairpin bin"/>
    <property type="match status" value="1"/>
</dbReference>
<dbReference type="Gene3D" id="2.40.50.140">
    <property type="entry name" value="Nucleic acid-binding proteins"/>
    <property type="match status" value="1"/>
</dbReference>
<dbReference type="HAMAP" id="MF_01587">
    <property type="entry name" value="DNA_ligase_B"/>
    <property type="match status" value="1"/>
</dbReference>
<dbReference type="InterPro" id="IPR018239">
    <property type="entry name" value="DNA_ligase_AS"/>
</dbReference>
<dbReference type="InterPro" id="IPR020923">
    <property type="entry name" value="DNA_ligase_B"/>
</dbReference>
<dbReference type="InterPro" id="IPR033136">
    <property type="entry name" value="DNA_ligase_CS"/>
</dbReference>
<dbReference type="InterPro" id="IPR013839">
    <property type="entry name" value="DNAligase_adenylation"/>
</dbReference>
<dbReference type="InterPro" id="IPR013840">
    <property type="entry name" value="DNAligase_N"/>
</dbReference>
<dbReference type="InterPro" id="IPR012340">
    <property type="entry name" value="NA-bd_OB-fold"/>
</dbReference>
<dbReference type="InterPro" id="IPR050326">
    <property type="entry name" value="NAD_dep_DNA_ligaseB"/>
</dbReference>
<dbReference type="InterPro" id="IPR004150">
    <property type="entry name" value="NAD_DNA_ligase_OB"/>
</dbReference>
<dbReference type="InterPro" id="IPR010994">
    <property type="entry name" value="RuvA_2-like"/>
</dbReference>
<dbReference type="NCBIfam" id="NF005987">
    <property type="entry name" value="PRK08097.1"/>
    <property type="match status" value="1"/>
</dbReference>
<dbReference type="PANTHER" id="PTHR47810">
    <property type="entry name" value="DNA LIGASE"/>
    <property type="match status" value="1"/>
</dbReference>
<dbReference type="PANTHER" id="PTHR47810:SF1">
    <property type="entry name" value="DNA LIGASE B"/>
    <property type="match status" value="1"/>
</dbReference>
<dbReference type="Pfam" id="PF01653">
    <property type="entry name" value="DNA_ligase_aden"/>
    <property type="match status" value="1"/>
</dbReference>
<dbReference type="Pfam" id="PF03120">
    <property type="entry name" value="DNA_ligase_OB"/>
    <property type="match status" value="1"/>
</dbReference>
<dbReference type="SMART" id="SM00532">
    <property type="entry name" value="LIGANc"/>
    <property type="match status" value="1"/>
</dbReference>
<dbReference type="SUPFAM" id="SSF56091">
    <property type="entry name" value="DNA ligase/mRNA capping enzyme, catalytic domain"/>
    <property type="match status" value="1"/>
</dbReference>
<dbReference type="SUPFAM" id="SSF50249">
    <property type="entry name" value="Nucleic acid-binding proteins"/>
    <property type="match status" value="1"/>
</dbReference>
<dbReference type="SUPFAM" id="SSF47781">
    <property type="entry name" value="RuvA domain 2-like"/>
    <property type="match status" value="1"/>
</dbReference>
<dbReference type="PROSITE" id="PS01055">
    <property type="entry name" value="DNA_LIGASE_N1"/>
    <property type="match status" value="1"/>
</dbReference>
<dbReference type="PROSITE" id="PS01056">
    <property type="entry name" value="DNA_LIGASE_N2"/>
    <property type="match status" value="1"/>
</dbReference>
<accession>B7N287</accession>
<proteinExistence type="inferred from homology"/>
<feature type="chain" id="PRO_1000185680" description="DNA ligase B">
    <location>
        <begin position="1"/>
        <end position="560"/>
    </location>
</feature>
<feature type="active site" description="N6-AMP-lysine intermediate" evidence="1">
    <location>
        <position position="124"/>
    </location>
</feature>
<name>LIGB_ECO81</name>
<comment type="function">
    <text evidence="1">Catalyzes the formation of phosphodiester linkages between 5'-phosphoryl and 3'-hydroxyl groups in double-stranded DNA using NAD as a coenzyme and as the energy source for the reaction.</text>
</comment>
<comment type="catalytic activity">
    <reaction evidence="1">
        <text>NAD(+) + (deoxyribonucleotide)n-3'-hydroxyl + 5'-phospho-(deoxyribonucleotide)m = (deoxyribonucleotide)n+m + AMP + beta-nicotinamide D-nucleotide.</text>
        <dbReference type="EC" id="6.5.1.2"/>
    </reaction>
</comment>
<comment type="similarity">
    <text evidence="1">Belongs to the NAD-dependent DNA ligase family. LigB subfamily.</text>
</comment>
<sequence>MKVWMAILISILCWQSSAWAVCPAWSPARAQEEISRLQQQIKQWDDDYWKEGKSEVEDGVYDQLSARLTQWQRCFGNETRDVMMPPLNGAVMHPVAHTGVRKMADKNALSLWMRERSDLWVQPKVDGVAVTLVYRDGKLNKAISRGNGLKGEDWTQKVRLISAVPQTVSGPLANSTLQGEIFLKRKGHIQQQMGGINARAKVAGLMMRQGNSDTLNSLAVFVWAWPDGPHLMTDRLKDLATAGFTLTQTYTRAVKNADEVAHVRNEWWKAKLPFVTDGVVVRAAKEPESRHWLPGQAEWLVAWKYQPVAQVAEVKAIQFAVGKSGKISVVASLAPVMLDDKKIQRVNIGSVRRWQEWDIAPGDQILVSLAGQGIPRIDDVVWRGAERTKPTPPENRFNSLTCYFASDVCQEQFISRLVWLGSKQVLGLDGIGEAGWRALHQTHRFEHIFSWLLLTPEQLQNTPGIAKSKSAQLWHQFNLARQQPFTRWVMAMGIPLTRAALNASDERSWSQLLFSKEQFWQQLPGTGSGRARQVIEWKENAQIKKLGSWLAAQQITGFEP</sequence>
<keyword id="KW-0227">DNA damage</keyword>
<keyword id="KW-0234">DNA repair</keyword>
<keyword id="KW-0235">DNA replication</keyword>
<keyword id="KW-0436">Ligase</keyword>
<keyword id="KW-0520">NAD</keyword>
<gene>
    <name evidence="1" type="primary">ligB</name>
    <name type="ordered locus">ECED1_4330</name>
</gene>
<evidence type="ECO:0000255" key="1">
    <source>
        <dbReference type="HAMAP-Rule" id="MF_01587"/>
    </source>
</evidence>